<protein>
    <recommendedName>
        <fullName evidence="5">Probable glucuronosyltransferase 47 A</fullName>
        <shortName evidence="5">PpGT47A</shortName>
        <ecNumber evidence="6">2.4.-.-</ecNumber>
    </recommendedName>
</protein>
<accession>A9RGD8</accession>
<evidence type="ECO:0000250" key="1">
    <source>
        <dbReference type="UniProtKB" id="Q9ZUV3"/>
    </source>
</evidence>
<evidence type="ECO:0000255" key="2"/>
<evidence type="ECO:0000255" key="3">
    <source>
        <dbReference type="PROSITE-ProRule" id="PRU00498"/>
    </source>
</evidence>
<evidence type="ECO:0000269" key="4">
    <source>
    </source>
</evidence>
<evidence type="ECO:0000303" key="5">
    <source>
    </source>
</evidence>
<evidence type="ECO:0000305" key="6"/>
<evidence type="ECO:0000305" key="7">
    <source>
    </source>
</evidence>
<evidence type="ECO:0000312" key="8">
    <source>
        <dbReference type="EMBL" id="EDQ82227.1"/>
    </source>
</evidence>
<feature type="chain" id="PRO_0000431620" description="Probable glucuronosyltransferase 47 A">
    <location>
        <begin position="1"/>
        <end position="449"/>
    </location>
</feature>
<feature type="topological domain" description="Cytoplasmic" evidence="6">
    <location>
        <begin position="1"/>
        <end position="31"/>
    </location>
</feature>
<feature type="transmembrane region" description="Helical; Signal-anchor for type II membrane protein" evidence="2">
    <location>
        <begin position="32"/>
        <end position="52"/>
    </location>
</feature>
<feature type="topological domain" description="Lumenal" evidence="6">
    <location>
        <begin position="53"/>
        <end position="449"/>
    </location>
</feature>
<feature type="glycosylation site" description="N-linked (GlcNAc...) asparagine" evidence="3">
    <location>
        <position position="172"/>
    </location>
</feature>
<feature type="glycosylation site" description="N-linked (GlcNAc...) asparagine" evidence="3">
    <location>
        <position position="433"/>
    </location>
</feature>
<proteinExistence type="evidence at transcript level"/>
<reference key="1">
    <citation type="journal article" date="2008" name="Science">
        <title>The Physcomitrella genome reveals evolutionary insights into the conquest of land by plants.</title>
        <authorList>
            <person name="Rensing S.A."/>
            <person name="Lang D."/>
            <person name="Zimmer A.D."/>
            <person name="Terry A."/>
            <person name="Salamov A."/>
            <person name="Shapiro H."/>
            <person name="Nishiyama T."/>
            <person name="Perroud P.-F."/>
            <person name="Lindquist E.A."/>
            <person name="Kamisugi Y."/>
            <person name="Tanahashi T."/>
            <person name="Sakakibara K."/>
            <person name="Fujita T."/>
            <person name="Oishi K."/>
            <person name="Shin-I T."/>
            <person name="Kuroki Y."/>
            <person name="Toyoda A."/>
            <person name="Suzuki Y."/>
            <person name="Hashimoto S.-I."/>
            <person name="Yamaguchi K."/>
            <person name="Sugano S."/>
            <person name="Kohara Y."/>
            <person name="Fujiyama A."/>
            <person name="Anterola A."/>
            <person name="Aoki S."/>
            <person name="Ashton N."/>
            <person name="Barbazuk W.B."/>
            <person name="Barker E."/>
            <person name="Bennetzen J.L."/>
            <person name="Blankenship R."/>
            <person name="Cho S.H."/>
            <person name="Dutcher S.K."/>
            <person name="Estelle M."/>
            <person name="Fawcett J.A."/>
            <person name="Gundlach H."/>
            <person name="Hanada K."/>
            <person name="Heyl A."/>
            <person name="Hicks K.A."/>
            <person name="Hughes J."/>
            <person name="Lohr M."/>
            <person name="Mayer K."/>
            <person name="Melkozernov A."/>
            <person name="Murata T."/>
            <person name="Nelson D.R."/>
            <person name="Pils B."/>
            <person name="Prigge M."/>
            <person name="Reiss B."/>
            <person name="Renner T."/>
            <person name="Rombauts S."/>
            <person name="Rushton P.J."/>
            <person name="Sanderfoot A."/>
            <person name="Schween G."/>
            <person name="Shiu S.-H."/>
            <person name="Stueber K."/>
            <person name="Theodoulou F.L."/>
            <person name="Tu H."/>
            <person name="Van de Peer Y."/>
            <person name="Verrier P.J."/>
            <person name="Waters E."/>
            <person name="Wood A."/>
            <person name="Yang L."/>
            <person name="Cove D."/>
            <person name="Cuming A.C."/>
            <person name="Hasebe M."/>
            <person name="Lucas S."/>
            <person name="Mishler B.D."/>
            <person name="Reski R."/>
            <person name="Grigoriev I.V."/>
            <person name="Quatrano R.S."/>
            <person name="Boore J.L."/>
        </authorList>
    </citation>
    <scope>NUCLEOTIDE SEQUENCE [LARGE SCALE GENOMIC DNA]</scope>
    <source>
        <strain>cv. Gransden 2004</strain>
    </source>
</reference>
<reference key="2">
    <citation type="journal article" date="2013" name="BMC Plant Biol.">
        <title>Partial functional conservation of IRX10 homologs in physcomitrella patens and Arabidopsis thaliana indicates an evolutionary step contributing to vascular formation in land plants.</title>
        <authorList>
            <person name="Hornblad E."/>
            <person name="Ulfstedt M."/>
            <person name="Ronne H."/>
            <person name="Marchant A."/>
        </authorList>
    </citation>
    <scope>FUNCTION</scope>
    <scope>DISRUPTION PHENOTYPE</scope>
    <scope>TISSUE SPECIFICITY</scope>
    <scope>DEVELOPMENTAL STAGE</scope>
</reference>
<organism>
    <name type="scientific">Physcomitrium patens</name>
    <name type="common">Spreading-leaved earth moss</name>
    <name type="synonym">Physcomitrella patens</name>
    <dbReference type="NCBI Taxonomy" id="3218"/>
    <lineage>
        <taxon>Eukaryota</taxon>
        <taxon>Viridiplantae</taxon>
        <taxon>Streptophyta</taxon>
        <taxon>Embryophyta</taxon>
        <taxon>Bryophyta</taxon>
        <taxon>Bryophytina</taxon>
        <taxon>Bryopsida</taxon>
        <taxon>Funariidae</taxon>
        <taxon>Funariales</taxon>
        <taxon>Funariaceae</taxon>
        <taxon>Physcomitrium</taxon>
    </lineage>
</organism>
<sequence>MEHPLECADSCSLAMSWFCNKKCRGWGLMKRTVVASGLRSVVLLLLFIYFVQDVTAEMGHQRISGSAGDVLEDNPVGRLKVFIYDIPSKYNTDWLKKDPRCLTHMFAVEEYLHDFLTESPVRTLNPEEADWFYTPVYTTCDLTPNGLPLPFKSPRVMRSAISYISSHWPYWNRTDGADHFFVVPHDFAACFHYQEEKAIERGILPLLKRATLIQTFGQNHHVCLKEDSIVIPPYAPPERMQTRLNPPSTPRSIFAYFRGLFYDPGNDPEGGYYARGARAAIWENFKDNPLFDISTEHPATYYEDMQRAIFCLCPLGWAPWSPRLVEGVIFGCIPVIIADDIVLPFADAIPWEKIGVFVEEKDVPILDKILCTINHEEVLEKQRLLANPAMKQAMLFPRPAKPGDAFHQILNGLARKLPHDPSIYLQPGQSFLNWTEGPPGDLYPWGNDL</sequence>
<comment type="function">
    <text evidence="7">Involved in the synthesis of glucuronoxylan hemicellulose in secondary cell walls.</text>
</comment>
<comment type="subcellular location">
    <subcellularLocation>
        <location evidence="1">Golgi apparatus membrane</location>
        <topology evidence="1">Single-pass type II membrane protein</topology>
    </subcellularLocation>
</comment>
<comment type="tissue specificity">
    <text evidence="4">Mostly expressed in newly formed or expanding tissues.</text>
</comment>
<comment type="developmental stage">
    <text evidence="4">Mainly observed in the apical region of the adult gametophore, new branches forming on the side of the mature gametophore and in the tissue immediately basal to the immature sporophyte. Also detected in the antheridia. Expressed at the tips of the protonema side branches and in lateral buds of the chloronema.</text>
</comment>
<comment type="disruption phenotype">
    <text evidence="4">No visible phenotype and no significant change in monosaccharide composition of the cell walls.</text>
</comment>
<comment type="similarity">
    <text evidence="6">Belongs to the glycosyltransferase 47 family.</text>
</comment>
<gene>
    <name evidence="5" type="primary">GT47A</name>
    <name evidence="8" type="ORF">PHYPADRAFT_202121</name>
</gene>
<name>GT47A_PHYPA</name>
<keyword id="KW-0961">Cell wall biogenesis/degradation</keyword>
<keyword id="KW-0325">Glycoprotein</keyword>
<keyword id="KW-0328">Glycosyltransferase</keyword>
<keyword id="KW-0333">Golgi apparatus</keyword>
<keyword id="KW-0472">Membrane</keyword>
<keyword id="KW-1185">Reference proteome</keyword>
<keyword id="KW-0735">Signal-anchor</keyword>
<keyword id="KW-0808">Transferase</keyword>
<keyword id="KW-0812">Transmembrane</keyword>
<keyword id="KW-1133">Transmembrane helix</keyword>
<dbReference type="EC" id="2.4.-.-" evidence="6"/>
<dbReference type="EMBL" id="DS544896">
    <property type="protein sequence ID" value="EDQ82227.1"/>
    <property type="molecule type" value="Genomic_DNA"/>
</dbReference>
<dbReference type="RefSeq" id="XP_001753186.1">
    <property type="nucleotide sequence ID" value="XM_001753134.1"/>
</dbReference>
<dbReference type="FunCoup" id="A9RGD8">
    <property type="interactions" value="2232"/>
</dbReference>
<dbReference type="GlyCosmos" id="A9RGD8">
    <property type="glycosylation" value="2 sites, No reported glycans"/>
</dbReference>
<dbReference type="PaxDb" id="3218-PP1S7_455V6.1"/>
<dbReference type="EnsemblPlants" id="Pp3c2_6740V3.1">
    <property type="protein sequence ID" value="Pp3c2_6740V3.1"/>
    <property type="gene ID" value="Pp3c2_6740"/>
</dbReference>
<dbReference type="EnsemblPlants" id="Pp3c2_6740V3.2">
    <property type="protein sequence ID" value="Pp3c2_6740V3.2"/>
    <property type="gene ID" value="Pp3c2_6740"/>
</dbReference>
<dbReference type="Gramene" id="Pp3c2_6740V3.1">
    <property type="protein sequence ID" value="Pp3c2_6740V3.1"/>
    <property type="gene ID" value="Pp3c2_6740"/>
</dbReference>
<dbReference type="Gramene" id="Pp3c2_6740V3.2">
    <property type="protein sequence ID" value="Pp3c2_6740V3.2"/>
    <property type="gene ID" value="Pp3c2_6740"/>
</dbReference>
<dbReference type="eggNOG" id="KOG1021">
    <property type="taxonomic scope" value="Eukaryota"/>
</dbReference>
<dbReference type="HOGENOM" id="CLU_039682_1_0_1"/>
<dbReference type="InParanoid" id="A9RGD8"/>
<dbReference type="OMA" id="AMMFPQP"/>
<dbReference type="OrthoDB" id="1924787at2759"/>
<dbReference type="Proteomes" id="UP000006727">
    <property type="component" value="Chromosome 2"/>
</dbReference>
<dbReference type="GO" id="GO:0000139">
    <property type="term" value="C:Golgi membrane"/>
    <property type="evidence" value="ECO:0007669"/>
    <property type="project" value="UniProtKB-SubCell"/>
</dbReference>
<dbReference type="GO" id="GO:0080116">
    <property type="term" value="F:glucuronoxylan glucuronosyltransferase activity"/>
    <property type="evidence" value="ECO:0000250"/>
    <property type="project" value="UniProtKB"/>
</dbReference>
<dbReference type="GO" id="GO:0071555">
    <property type="term" value="P:cell wall organization"/>
    <property type="evidence" value="ECO:0007669"/>
    <property type="project" value="UniProtKB-KW"/>
</dbReference>
<dbReference type="GO" id="GO:0010417">
    <property type="term" value="P:glucuronoxylan biosynthetic process"/>
    <property type="evidence" value="ECO:0000250"/>
    <property type="project" value="UniProtKB"/>
</dbReference>
<dbReference type="GO" id="GO:0009834">
    <property type="term" value="P:plant-type secondary cell wall biogenesis"/>
    <property type="evidence" value="ECO:0000250"/>
    <property type="project" value="UniProtKB"/>
</dbReference>
<dbReference type="GO" id="GO:0006486">
    <property type="term" value="P:protein glycosylation"/>
    <property type="evidence" value="ECO:0007669"/>
    <property type="project" value="InterPro"/>
</dbReference>
<dbReference type="GO" id="GO:0045492">
    <property type="term" value="P:xylan biosynthetic process"/>
    <property type="evidence" value="ECO:0000250"/>
    <property type="project" value="UniProtKB"/>
</dbReference>
<dbReference type="InterPro" id="IPR004263">
    <property type="entry name" value="Exostosin"/>
</dbReference>
<dbReference type="InterPro" id="IPR040911">
    <property type="entry name" value="Exostosin_GT47"/>
</dbReference>
<dbReference type="PANTHER" id="PTHR11062:SF200">
    <property type="entry name" value="BETA-1,4-XYLOSYLTRANSFERASE IRX10L-RELATED"/>
    <property type="match status" value="1"/>
</dbReference>
<dbReference type="PANTHER" id="PTHR11062">
    <property type="entry name" value="EXOSTOSIN HEPARAN SULFATE GLYCOSYLTRANSFERASE -RELATED"/>
    <property type="match status" value="1"/>
</dbReference>
<dbReference type="Pfam" id="PF03016">
    <property type="entry name" value="Exostosin_GT47"/>
    <property type="match status" value="1"/>
</dbReference>